<dbReference type="EMBL" id="CP000030">
    <property type="protein sequence ID" value="AAV87057.1"/>
    <property type="molecule type" value="Genomic_DNA"/>
</dbReference>
<dbReference type="RefSeq" id="WP_011114644.1">
    <property type="nucleotide sequence ID" value="NZ_AFMU01000038.1"/>
</dbReference>
<dbReference type="SMR" id="Q5P9H3"/>
<dbReference type="KEGG" id="ama:AM1243"/>
<dbReference type="HOGENOM" id="CLU_009621_2_1_5"/>
<dbReference type="GO" id="GO:0005737">
    <property type="term" value="C:cytoplasm"/>
    <property type="evidence" value="ECO:0007669"/>
    <property type="project" value="UniProtKB-SubCell"/>
</dbReference>
<dbReference type="GO" id="GO:0009380">
    <property type="term" value="C:excinuclease repair complex"/>
    <property type="evidence" value="ECO:0007669"/>
    <property type="project" value="InterPro"/>
</dbReference>
<dbReference type="GO" id="GO:0005524">
    <property type="term" value="F:ATP binding"/>
    <property type="evidence" value="ECO:0007669"/>
    <property type="project" value="UniProtKB-UniRule"/>
</dbReference>
<dbReference type="GO" id="GO:0016887">
    <property type="term" value="F:ATP hydrolysis activity"/>
    <property type="evidence" value="ECO:0007669"/>
    <property type="project" value="InterPro"/>
</dbReference>
<dbReference type="GO" id="GO:0003677">
    <property type="term" value="F:DNA binding"/>
    <property type="evidence" value="ECO:0007669"/>
    <property type="project" value="UniProtKB-UniRule"/>
</dbReference>
<dbReference type="GO" id="GO:0009381">
    <property type="term" value="F:excinuclease ABC activity"/>
    <property type="evidence" value="ECO:0007669"/>
    <property type="project" value="UniProtKB-UniRule"/>
</dbReference>
<dbReference type="GO" id="GO:0006289">
    <property type="term" value="P:nucleotide-excision repair"/>
    <property type="evidence" value="ECO:0007669"/>
    <property type="project" value="UniProtKB-UniRule"/>
</dbReference>
<dbReference type="GO" id="GO:0009432">
    <property type="term" value="P:SOS response"/>
    <property type="evidence" value="ECO:0007669"/>
    <property type="project" value="UniProtKB-UniRule"/>
</dbReference>
<dbReference type="CDD" id="cd17916">
    <property type="entry name" value="DEXHc_UvrB"/>
    <property type="match status" value="1"/>
</dbReference>
<dbReference type="CDD" id="cd18790">
    <property type="entry name" value="SF2_C_UvrB"/>
    <property type="match status" value="1"/>
</dbReference>
<dbReference type="Gene3D" id="3.40.50.300">
    <property type="entry name" value="P-loop containing nucleotide triphosphate hydrolases"/>
    <property type="match status" value="3"/>
</dbReference>
<dbReference type="Gene3D" id="4.10.860.10">
    <property type="entry name" value="UVR domain"/>
    <property type="match status" value="1"/>
</dbReference>
<dbReference type="HAMAP" id="MF_00204">
    <property type="entry name" value="UvrB"/>
    <property type="match status" value="1"/>
</dbReference>
<dbReference type="InterPro" id="IPR006935">
    <property type="entry name" value="Helicase/UvrB_N"/>
</dbReference>
<dbReference type="InterPro" id="IPR014001">
    <property type="entry name" value="Helicase_ATP-bd"/>
</dbReference>
<dbReference type="InterPro" id="IPR001650">
    <property type="entry name" value="Helicase_C-like"/>
</dbReference>
<dbReference type="InterPro" id="IPR027417">
    <property type="entry name" value="P-loop_NTPase"/>
</dbReference>
<dbReference type="InterPro" id="IPR001943">
    <property type="entry name" value="UVR_dom"/>
</dbReference>
<dbReference type="InterPro" id="IPR036876">
    <property type="entry name" value="UVR_dom_sf"/>
</dbReference>
<dbReference type="InterPro" id="IPR004807">
    <property type="entry name" value="UvrB"/>
</dbReference>
<dbReference type="InterPro" id="IPR041471">
    <property type="entry name" value="UvrB_inter"/>
</dbReference>
<dbReference type="InterPro" id="IPR024759">
    <property type="entry name" value="UvrB_YAD/RRR_dom"/>
</dbReference>
<dbReference type="NCBIfam" id="NF003673">
    <property type="entry name" value="PRK05298.1"/>
    <property type="match status" value="1"/>
</dbReference>
<dbReference type="NCBIfam" id="TIGR00631">
    <property type="entry name" value="uvrb"/>
    <property type="match status" value="1"/>
</dbReference>
<dbReference type="PANTHER" id="PTHR24029">
    <property type="entry name" value="UVRABC SYSTEM PROTEIN B"/>
    <property type="match status" value="1"/>
</dbReference>
<dbReference type="PANTHER" id="PTHR24029:SF0">
    <property type="entry name" value="UVRABC SYSTEM PROTEIN B"/>
    <property type="match status" value="1"/>
</dbReference>
<dbReference type="Pfam" id="PF00271">
    <property type="entry name" value="Helicase_C"/>
    <property type="match status" value="1"/>
</dbReference>
<dbReference type="Pfam" id="PF04851">
    <property type="entry name" value="ResIII"/>
    <property type="match status" value="1"/>
</dbReference>
<dbReference type="Pfam" id="PF02151">
    <property type="entry name" value="UVR"/>
    <property type="match status" value="1"/>
</dbReference>
<dbReference type="Pfam" id="PF12344">
    <property type="entry name" value="UvrB"/>
    <property type="match status" value="1"/>
</dbReference>
<dbReference type="Pfam" id="PF17757">
    <property type="entry name" value="UvrB_inter"/>
    <property type="match status" value="1"/>
</dbReference>
<dbReference type="SMART" id="SM00487">
    <property type="entry name" value="DEXDc"/>
    <property type="match status" value="1"/>
</dbReference>
<dbReference type="SMART" id="SM00490">
    <property type="entry name" value="HELICc"/>
    <property type="match status" value="1"/>
</dbReference>
<dbReference type="SUPFAM" id="SSF46600">
    <property type="entry name" value="C-terminal UvrC-binding domain of UvrB"/>
    <property type="match status" value="1"/>
</dbReference>
<dbReference type="SUPFAM" id="SSF52540">
    <property type="entry name" value="P-loop containing nucleoside triphosphate hydrolases"/>
    <property type="match status" value="2"/>
</dbReference>
<dbReference type="PROSITE" id="PS51192">
    <property type="entry name" value="HELICASE_ATP_BIND_1"/>
    <property type="match status" value="1"/>
</dbReference>
<dbReference type="PROSITE" id="PS51194">
    <property type="entry name" value="HELICASE_CTER"/>
    <property type="match status" value="1"/>
</dbReference>
<dbReference type="PROSITE" id="PS50151">
    <property type="entry name" value="UVR"/>
    <property type="match status" value="1"/>
</dbReference>
<keyword id="KW-0067">ATP-binding</keyword>
<keyword id="KW-0963">Cytoplasm</keyword>
<keyword id="KW-0227">DNA damage</keyword>
<keyword id="KW-0228">DNA excision</keyword>
<keyword id="KW-0234">DNA repair</keyword>
<keyword id="KW-0267">Excision nuclease</keyword>
<keyword id="KW-0547">Nucleotide-binding</keyword>
<keyword id="KW-0742">SOS response</keyword>
<evidence type="ECO:0000255" key="1">
    <source>
        <dbReference type="HAMAP-Rule" id="MF_00204"/>
    </source>
</evidence>
<evidence type="ECO:0000256" key="2">
    <source>
        <dbReference type="SAM" id="MobiDB-lite"/>
    </source>
</evidence>
<organism>
    <name type="scientific">Anaplasma marginale (strain St. Maries)</name>
    <dbReference type="NCBI Taxonomy" id="234826"/>
    <lineage>
        <taxon>Bacteria</taxon>
        <taxon>Pseudomonadati</taxon>
        <taxon>Pseudomonadota</taxon>
        <taxon>Alphaproteobacteria</taxon>
        <taxon>Rickettsiales</taxon>
        <taxon>Anaplasmataceae</taxon>
        <taxon>Anaplasma</taxon>
    </lineage>
</organism>
<comment type="function">
    <text evidence="1">The UvrABC repair system catalyzes the recognition and processing of DNA lesions. A damage recognition complex composed of 2 UvrA and 2 UvrB subunits scans DNA for abnormalities. Upon binding of the UvrA(2)B(2) complex to a putative damaged site, the DNA wraps around one UvrB monomer. DNA wrap is dependent on ATP binding by UvrB and probably causes local melting of the DNA helix, facilitating insertion of UvrB beta-hairpin between the DNA strands. Then UvrB probes one DNA strand for the presence of a lesion. If a lesion is found the UvrA subunits dissociate and the UvrB-DNA preincision complex is formed. This complex is subsequently bound by UvrC and the second UvrB is released. If no lesion is found, the DNA wraps around the other UvrB subunit that will check the other stand for damage.</text>
</comment>
<comment type="subunit">
    <text evidence="1">Forms a heterotetramer with UvrA during the search for lesions. Interacts with UvrC in an incision complex.</text>
</comment>
<comment type="subcellular location">
    <subcellularLocation>
        <location evidence="1">Cytoplasm</location>
    </subcellularLocation>
</comment>
<comment type="domain">
    <text evidence="1">The beta-hairpin motif is involved in DNA binding.</text>
</comment>
<comment type="similarity">
    <text evidence="1">Belongs to the UvrB family.</text>
</comment>
<name>UVRB_ANAMM</name>
<proteinExistence type="inferred from homology"/>
<reference key="1">
    <citation type="journal article" date="2005" name="Proc. Natl. Acad. Sci. U.S.A.">
        <title>Complete genome sequencing of Anaplasma marginale reveals that the surface is skewed to two superfamilies of outer membrane proteins.</title>
        <authorList>
            <person name="Brayton K.A."/>
            <person name="Kappmeyer L.S."/>
            <person name="Herndon D.R."/>
            <person name="Dark M.J."/>
            <person name="Tibbals D.L."/>
            <person name="Palmer G.H."/>
            <person name="McGuire T.C."/>
            <person name="Knowles D.P. Jr."/>
        </authorList>
    </citation>
    <scope>NUCLEOTIDE SEQUENCE [LARGE SCALE GENOMIC DNA]</scope>
    <source>
        <strain>St. Maries</strain>
    </source>
</reference>
<feature type="chain" id="PRO_0000227277" description="UvrABC system protein B">
    <location>
        <begin position="1"/>
        <end position="651"/>
    </location>
</feature>
<feature type="domain" description="Helicase ATP-binding" evidence="1">
    <location>
        <begin position="25"/>
        <end position="411"/>
    </location>
</feature>
<feature type="domain" description="Helicase C-terminal" evidence="1">
    <location>
        <begin position="427"/>
        <end position="591"/>
    </location>
</feature>
<feature type="domain" description="UVR" evidence="1">
    <location>
        <begin position="616"/>
        <end position="651"/>
    </location>
</feature>
<feature type="region of interest" description="Disordered" evidence="2">
    <location>
        <begin position="593"/>
        <end position="615"/>
    </location>
</feature>
<feature type="short sequence motif" description="Beta-hairpin">
    <location>
        <begin position="91"/>
        <end position="114"/>
    </location>
</feature>
<feature type="binding site" evidence="1">
    <location>
        <begin position="38"/>
        <end position="45"/>
    </location>
    <ligand>
        <name>ATP</name>
        <dbReference type="ChEBI" id="CHEBI:30616"/>
    </ligand>
</feature>
<accession>Q5P9H3</accession>
<sequence length="651" mass="73824">MQRFKISSEFNPSGDQPGAIDSLVRGISCGAKEQTLLGVTGSGKTFTMASVIEQTQRPAIIIAHNKTLAAQLHEEMRSFFPENAVEYFVSYYDYYQPEAYIPQSDVYIEKDALINDKIDLLRHSATRSLLERRDVVVVASVSCIYGLGSPELYSEMTVPIALGMKLDMCQLQERLVELQYKHGNRYERGNFSVQGDVLSVFPSHYEDRIWKISFFGDEVDSIQEVDPKSGMVTLKLEKIKIFPNSHYVTPRPTLLQAISEIEKELDECALQFKQCNKIVEADRIVERTRFDIEMMRETGTCKGIENYSRYLCGKEAGDPPNTLLDYLPQDAIMFIDESHMTVPQIRAMYNGDRMRKANLINHGFRMPSALDNRPLTFAEWEDRKPTVVYVSATPGQYELQQTGGVATEQLIRPTGLLDPVCIVKGADGQIHDVMCESQATIARGYRVLITTLTKKMAENLTEYMREMGIKVAYLHSDVKTLERIEIISDLRLGVIDVLVGVNLMREGLDIPECALVGILDADKEGFLRSTTSLIQTIGRAARNVEGRVILYANVITKSMRTAMEETDRRRDIQRKYNQEHSIVPRTIQKPVQTSLSERVGSSRKKVSRDTNTDPANRDIVELQKEMLLCAENLDFERAVEIRNEIKRLTAP</sequence>
<gene>
    <name evidence="1" type="primary">uvrB</name>
    <name type="ordered locus">AM1243</name>
</gene>
<protein>
    <recommendedName>
        <fullName evidence="1">UvrABC system protein B</fullName>
        <shortName evidence="1">Protein UvrB</shortName>
    </recommendedName>
    <alternativeName>
        <fullName evidence="1">Excinuclease ABC subunit B</fullName>
    </alternativeName>
</protein>